<proteinExistence type="inferred from homology"/>
<reference evidence="8" key="1">
    <citation type="journal article" date="2018" name="PLoS ONE">
        <title>Proteomic endorsed transcriptomic profiles of venom glands from Tityus obscurus and T. serrulatus scorpions.</title>
        <authorList>
            <person name="de Oliveira U.C."/>
            <person name="Nishiyama M.Y. Jr."/>
            <person name="Dos Santos M.B.V."/>
            <person name="Santos-da-Silva A.P."/>
            <person name="Chalkidis H.M."/>
            <person name="Souza-Imberg A."/>
            <person name="Candido D.M."/>
            <person name="Yamanouye N."/>
            <person name="Dorce V.A.C."/>
            <person name="Junqueira-de-Azevedo I.L.M."/>
        </authorList>
    </citation>
    <scope>NUCLEOTIDE SEQUENCE [MRNA]</scope>
    <source>
        <tissue>Telson</tissue>
    </source>
</reference>
<reference evidence="9" key="2">
    <citation type="journal article" date="2021" name="Toxicon">
        <title>Novel components of Tityus serrulatus venom: a transcriptomic approach.</title>
        <authorList>
            <person name="Kalapothakis Y."/>
            <person name="Miranda K."/>
            <person name="Pereira A.H."/>
            <person name="Witt A.S.A."/>
            <person name="Marani C."/>
            <person name="Martins A.P."/>
            <person name="Leal H.G."/>
            <person name="Campos-Junior E."/>
            <person name="Pimenta A.M.C."/>
            <person name="Borges A."/>
            <person name="Chavez-Olortegui C."/>
            <person name="Kalapothakis E."/>
        </authorList>
    </citation>
    <scope>NUCLEOTIDE SEQUENCE [MRNA]</scope>
    <source>
        <tissue>Telson</tissue>
    </source>
</reference>
<keyword id="KW-1015">Disulfide bond</keyword>
<keyword id="KW-0872">Ion channel impairing toxin</keyword>
<keyword id="KW-0528">Neurotoxin</keyword>
<keyword id="KW-0632">Potassium channel impairing toxin</keyword>
<keyword id="KW-0964">Secreted</keyword>
<keyword id="KW-0732">Signal</keyword>
<keyword id="KW-0800">Toxin</keyword>
<keyword id="KW-1220">Voltage-gated potassium channel impairing toxin</keyword>
<dbReference type="EMBL" id="GEUW01000070">
    <property type="protein sequence ID" value="JAW06975.1"/>
    <property type="molecule type" value="mRNA"/>
</dbReference>
<dbReference type="EMBL" id="MT450718">
    <property type="protein sequence ID" value="QPD99054.1"/>
    <property type="molecule type" value="mRNA"/>
</dbReference>
<dbReference type="SMR" id="A0A218QXT6"/>
<dbReference type="GO" id="GO:0005576">
    <property type="term" value="C:extracellular region"/>
    <property type="evidence" value="ECO:0007669"/>
    <property type="project" value="UniProtKB-SubCell"/>
</dbReference>
<dbReference type="GO" id="GO:0015459">
    <property type="term" value="F:potassium channel regulator activity"/>
    <property type="evidence" value="ECO:0007669"/>
    <property type="project" value="UniProtKB-KW"/>
</dbReference>
<dbReference type="GO" id="GO:0090729">
    <property type="term" value="F:toxin activity"/>
    <property type="evidence" value="ECO:0007669"/>
    <property type="project" value="UniProtKB-KW"/>
</dbReference>
<evidence type="ECO:0000250" key="1">
    <source>
        <dbReference type="UniProtKB" id="A9QLM3"/>
    </source>
</evidence>
<evidence type="ECO:0000255" key="2"/>
<evidence type="ECO:0000255" key="3">
    <source>
        <dbReference type="PROSITE-ProRule" id="PRU01209"/>
    </source>
</evidence>
<evidence type="ECO:0000303" key="4">
    <source>
    </source>
</evidence>
<evidence type="ECO:0000305" key="5"/>
<evidence type="ECO:0000305" key="6">
    <source>
    </source>
</evidence>
<evidence type="ECO:0000305" key="7">
    <source>
    </source>
</evidence>
<evidence type="ECO:0000312" key="8">
    <source>
        <dbReference type="EMBL" id="JAW06975.1"/>
    </source>
</evidence>
<evidence type="ECO:0000312" key="9">
    <source>
        <dbReference type="EMBL" id="QPD99054.1"/>
    </source>
</evidence>
<comment type="function">
    <text evidence="1">This recombinant toxin inhibits the mammalian voltage-gated potassium channels Kv1.3/KCNA3 in vitro with an IC(50) of 26.40 nM.</text>
</comment>
<comment type="subcellular location">
    <subcellularLocation>
        <location evidence="6 7">Secreted</location>
    </subcellularLocation>
</comment>
<comment type="tissue specificity">
    <text evidence="6 7">Expressed by the venom gland.</text>
</comment>
<comment type="domain">
    <text evidence="1">Has the structural arrangement of an alpha-helix connected to antiparallel beta-sheets by disulfide bonds (CS-alpha/beta).</text>
</comment>
<comment type="similarity">
    <text evidence="5">Belongs to the short scorpion toxin superfamily. Potassium channel inhibitor family. Alpha-KTx 11 subfamily.</text>
</comment>
<organism>
    <name type="scientific">Tityus serrulatus</name>
    <name type="common">Brazilian scorpion</name>
    <dbReference type="NCBI Taxonomy" id="6887"/>
    <lineage>
        <taxon>Eukaryota</taxon>
        <taxon>Metazoa</taxon>
        <taxon>Ecdysozoa</taxon>
        <taxon>Arthropoda</taxon>
        <taxon>Chelicerata</taxon>
        <taxon>Arachnida</taxon>
        <taxon>Scorpiones</taxon>
        <taxon>Buthida</taxon>
        <taxon>Buthoidea</taxon>
        <taxon>Buthidae</taxon>
        <taxon>Tityus</taxon>
    </lineage>
</organism>
<sequence>MNKVYLVAILVLSVLLVANVSPIEGVPTGGCPLSDALCAKYCKSNKYGKTGKCTGTSKGTCKCLV</sequence>
<accession>A0A218QXT6</accession>
<protein>
    <recommendedName>
        <fullName evidence="4">Putative potassium channel toxin Ts21</fullName>
    </recommendedName>
    <alternativeName>
        <fullName evidence="4">Putative KTx</fullName>
    </alternativeName>
    <alternativeName>
        <fullName evidence="5">Tityustoxin-21</fullName>
    </alternativeName>
</protein>
<feature type="signal peptide" evidence="2">
    <location>
        <begin position="1"/>
        <end position="25"/>
    </location>
</feature>
<feature type="chain" id="PRO_5013370101" description="Putative potassium channel toxin Ts21">
    <location>
        <begin position="26"/>
        <end position="65"/>
    </location>
</feature>
<feature type="disulfide bond" evidence="3">
    <location>
        <begin position="31"/>
        <end position="53"/>
    </location>
</feature>
<feature type="disulfide bond" evidence="3">
    <location>
        <begin position="38"/>
        <end position="61"/>
    </location>
</feature>
<feature type="disulfide bond" evidence="3">
    <location>
        <begin position="42"/>
        <end position="63"/>
    </location>
</feature>
<name>KTX21_TITSE</name>